<keyword id="KW-0025">Alternative splicing</keyword>
<keyword id="KW-0328">Glycosyltransferase</keyword>
<keyword id="KW-1185">Reference proteome</keyword>
<keyword id="KW-0808">Transferase</keyword>
<accession>Q9VXN0</accession>
<accession>Q29QR7</accession>
<dbReference type="EC" id="2.4.1.110" evidence="1"/>
<dbReference type="EMBL" id="AE014298">
    <property type="protein sequence ID" value="AAF48528.1"/>
    <property type="molecule type" value="Genomic_DNA"/>
</dbReference>
<dbReference type="EMBL" id="BT024323">
    <property type="protein sequence ID" value="ABC86385.1"/>
    <property type="molecule type" value="mRNA"/>
</dbReference>
<dbReference type="RefSeq" id="NP_573084.1">
    <molecule id="Q9VXN0-1"/>
    <property type="nucleotide sequence ID" value="NM_132856.2"/>
</dbReference>
<dbReference type="SMR" id="Q9VXN0"/>
<dbReference type="BioGRID" id="58890">
    <property type="interactions" value="1"/>
</dbReference>
<dbReference type="FunCoup" id="Q9VXN0">
    <property type="interactions" value="902"/>
</dbReference>
<dbReference type="IntAct" id="Q9VXN0">
    <property type="interactions" value="1"/>
</dbReference>
<dbReference type="STRING" id="7227.FBpp0073919"/>
<dbReference type="CAZy" id="GT4">
    <property type="family name" value="Glycosyltransferase Family 4"/>
</dbReference>
<dbReference type="PaxDb" id="7227-FBpp0073919"/>
<dbReference type="DNASU" id="32542"/>
<dbReference type="EnsemblMetazoa" id="FBtr0074105">
    <molecule id="Q9VXN0-1"/>
    <property type="protein sequence ID" value="FBpp0073919"/>
    <property type="gene ID" value="FBgn0030700"/>
</dbReference>
<dbReference type="GeneID" id="32542"/>
<dbReference type="KEGG" id="dme:Dmel_CG15914"/>
<dbReference type="UCSC" id="CG15914-RA">
    <molecule id="Q9VXN0-1"/>
    <property type="organism name" value="d. melanogaster"/>
</dbReference>
<dbReference type="AGR" id="FB:FBgn0030700"/>
<dbReference type="FlyBase" id="FBgn0030700">
    <property type="gene designation" value="CG15914"/>
</dbReference>
<dbReference type="VEuPathDB" id="VectorBase:FBgn0030700"/>
<dbReference type="eggNOG" id="ENOG502QQJ3">
    <property type="taxonomic scope" value="Eukaryota"/>
</dbReference>
<dbReference type="GeneTree" id="ENSGT00390000006631"/>
<dbReference type="HOGENOM" id="CLU_033439_1_0_1"/>
<dbReference type="InParanoid" id="Q9VXN0"/>
<dbReference type="OMA" id="CYPIAPN"/>
<dbReference type="OrthoDB" id="10032790at2759"/>
<dbReference type="PhylomeDB" id="Q9VXN0"/>
<dbReference type="BioGRID-ORCS" id="32542">
    <property type="hits" value="0 hits in 1 CRISPR screen"/>
</dbReference>
<dbReference type="GenomeRNAi" id="32542"/>
<dbReference type="PRO" id="PR:Q9VXN0"/>
<dbReference type="Proteomes" id="UP000000803">
    <property type="component" value="Chromosome X"/>
</dbReference>
<dbReference type="Bgee" id="FBgn0030700">
    <property type="expression patterns" value="Expressed in adult oenocyte (Drosophila) in body wall and 23 other cell types or tissues"/>
</dbReference>
<dbReference type="ExpressionAtlas" id="Q9VXN0">
    <property type="expression patterns" value="baseline and differential"/>
</dbReference>
<dbReference type="GO" id="GO:0000030">
    <property type="term" value="F:mannosyltransferase activity"/>
    <property type="evidence" value="ECO:0000303"/>
    <property type="project" value="FlyBase"/>
</dbReference>
<dbReference type="Gene3D" id="3.40.50.2000">
    <property type="entry name" value="Glycogen Phosphorylase B"/>
    <property type="match status" value="1"/>
</dbReference>
<dbReference type="InterPro" id="IPR001296">
    <property type="entry name" value="Glyco_trans_1"/>
</dbReference>
<dbReference type="InterPro" id="IPR051862">
    <property type="entry name" value="GT-like_domain_containing_1"/>
</dbReference>
<dbReference type="InterPro" id="IPR022701">
    <property type="entry name" value="QTMAN_N"/>
</dbReference>
<dbReference type="PANTHER" id="PTHR13615">
    <property type="entry name" value="GLYCOSYLTRANSFERASE-LIKE 1"/>
    <property type="match status" value="1"/>
</dbReference>
<dbReference type="PANTHER" id="PTHR13615:SF3">
    <property type="entry name" value="GLYCOSYLTRANSFERASE-LIKE DOMAIN-CONTAINING PROTEIN 1"/>
    <property type="match status" value="1"/>
</dbReference>
<dbReference type="Pfam" id="PF00534">
    <property type="entry name" value="Glycos_transf_1"/>
    <property type="match status" value="1"/>
</dbReference>
<dbReference type="Pfam" id="PF12038">
    <property type="entry name" value="QTMAN_N"/>
    <property type="match status" value="1"/>
</dbReference>
<dbReference type="SUPFAM" id="SSF53756">
    <property type="entry name" value="UDP-Glycosyltransferase/glycogen phosphorylase"/>
    <property type="match status" value="1"/>
</dbReference>
<protein>
    <recommendedName>
        <fullName>tRNA-queuosine alpha-mannosyltransferase</fullName>
        <ecNumber evidence="1">2.4.1.110</ecNumber>
    </recommendedName>
</protein>
<sequence>MSCAKPHILIIEPFYGGSHKQLIGALIEGLNHGDSEIFSLPAKKWHWRARTSALHFAQLIPRDHAFRVLFASSVLSLAELIGLRPDLAACRKIVYFHENQLIYPVREVKQRDCQYGFNEILSCLAADMVLFNSQFNCNSFLDNVQPFLNMQPDFKIKHIREQIEKKCQVLYFPVNFERFPIRKECVKGETAEDLDEKCIHLIWPHRWEHDKNPKLLVDTLCQLHERQVDFKVTICGESYQEIPEEFEHIQEKLGSKLVNFGHLEREEYLKTLLTGDIVISTADHEFFGVAMLEAAFCGCYPIAPNKLVYPEIYPKENLYNTSNALTKKLYNFCRMPRVFRKQRDQFFENFNFDRFSAKELVPKYLDIFNKHIADEQS</sequence>
<organism>
    <name type="scientific">Drosophila melanogaster</name>
    <name type="common">Fruit fly</name>
    <dbReference type="NCBI Taxonomy" id="7227"/>
    <lineage>
        <taxon>Eukaryota</taxon>
        <taxon>Metazoa</taxon>
        <taxon>Ecdysozoa</taxon>
        <taxon>Arthropoda</taxon>
        <taxon>Hexapoda</taxon>
        <taxon>Insecta</taxon>
        <taxon>Pterygota</taxon>
        <taxon>Neoptera</taxon>
        <taxon>Endopterygota</taxon>
        <taxon>Diptera</taxon>
        <taxon>Brachycera</taxon>
        <taxon>Muscomorpha</taxon>
        <taxon>Ephydroidea</taxon>
        <taxon>Drosophilidae</taxon>
        <taxon>Drosophila</taxon>
        <taxon>Sophophora</taxon>
    </lineage>
</organism>
<comment type="function">
    <text evidence="1">Glycosyltransferase that specifically catalyzes mannosylation of cytoplasmic tRNA(Asp) modified with queuosine at position 34 (queuosine(34)). Mannosylates the cyclopentene moiety of queuosine(34) in tRNA(Asp) to form mannosyl-queuosine(34).</text>
</comment>
<comment type="catalytic activity">
    <reaction evidence="1">
        <text>queuosine(34) in tRNA(Asp) + GDP-alpha-D-mannose = O-4''-alpha-D-mannosylqueuosine(34) in tRNA(Asp) + GDP + H(+)</text>
        <dbReference type="Rhea" id="RHEA:12885"/>
        <dbReference type="Rhea" id="RHEA-COMP:18572"/>
        <dbReference type="Rhea" id="RHEA-COMP:18581"/>
        <dbReference type="ChEBI" id="CHEBI:15378"/>
        <dbReference type="ChEBI" id="CHEBI:57527"/>
        <dbReference type="ChEBI" id="CHEBI:58189"/>
        <dbReference type="ChEBI" id="CHEBI:194431"/>
        <dbReference type="ChEBI" id="CHEBI:194442"/>
        <dbReference type="EC" id="2.4.1.110"/>
    </reaction>
    <physiologicalReaction direction="left-to-right" evidence="1">
        <dbReference type="Rhea" id="RHEA:12886"/>
    </physiologicalReaction>
</comment>
<comment type="alternative products">
    <event type="alternative splicing"/>
    <isoform>
        <id>Q9VXN0-1</id>
        <name>1</name>
        <sequence type="displayed"/>
    </isoform>
    <isoform>
        <id>Q9VXN0-2</id>
        <name>2</name>
        <sequence type="described" ref="VSP_029383"/>
    </isoform>
</comment>
<comment type="similarity">
    <text evidence="3">Belongs to the glycosyltransferase group 1 family. Glycosyltransferase 4 subfamily.</text>
</comment>
<gene>
    <name type="ORF">CG15914</name>
</gene>
<proteinExistence type="evidence at transcript level"/>
<feature type="chain" id="PRO_0000311095" description="tRNA-queuosine alpha-mannosyltransferase">
    <location>
        <begin position="1"/>
        <end position="377"/>
    </location>
</feature>
<feature type="splice variant" id="VSP_029383" description="In isoform 2." evidence="2">
    <location>
        <begin position="1"/>
        <end position="127"/>
    </location>
</feature>
<reference key="1">
    <citation type="journal article" date="2000" name="Science">
        <title>The genome sequence of Drosophila melanogaster.</title>
        <authorList>
            <person name="Adams M.D."/>
            <person name="Celniker S.E."/>
            <person name="Holt R.A."/>
            <person name="Evans C.A."/>
            <person name="Gocayne J.D."/>
            <person name="Amanatides P.G."/>
            <person name="Scherer S.E."/>
            <person name="Li P.W."/>
            <person name="Hoskins R.A."/>
            <person name="Galle R.F."/>
            <person name="George R.A."/>
            <person name="Lewis S.E."/>
            <person name="Richards S."/>
            <person name="Ashburner M."/>
            <person name="Henderson S.N."/>
            <person name="Sutton G.G."/>
            <person name="Wortman J.R."/>
            <person name="Yandell M.D."/>
            <person name="Zhang Q."/>
            <person name="Chen L.X."/>
            <person name="Brandon R.C."/>
            <person name="Rogers Y.-H.C."/>
            <person name="Blazej R.G."/>
            <person name="Champe M."/>
            <person name="Pfeiffer B.D."/>
            <person name="Wan K.H."/>
            <person name="Doyle C."/>
            <person name="Baxter E.G."/>
            <person name="Helt G."/>
            <person name="Nelson C.R."/>
            <person name="Miklos G.L.G."/>
            <person name="Abril J.F."/>
            <person name="Agbayani A."/>
            <person name="An H.-J."/>
            <person name="Andrews-Pfannkoch C."/>
            <person name="Baldwin D."/>
            <person name="Ballew R.M."/>
            <person name="Basu A."/>
            <person name="Baxendale J."/>
            <person name="Bayraktaroglu L."/>
            <person name="Beasley E.M."/>
            <person name="Beeson K.Y."/>
            <person name="Benos P.V."/>
            <person name="Berman B.P."/>
            <person name="Bhandari D."/>
            <person name="Bolshakov S."/>
            <person name="Borkova D."/>
            <person name="Botchan M.R."/>
            <person name="Bouck J."/>
            <person name="Brokstein P."/>
            <person name="Brottier P."/>
            <person name="Burtis K.C."/>
            <person name="Busam D.A."/>
            <person name="Butler H."/>
            <person name="Cadieu E."/>
            <person name="Center A."/>
            <person name="Chandra I."/>
            <person name="Cherry J.M."/>
            <person name="Cawley S."/>
            <person name="Dahlke C."/>
            <person name="Davenport L.B."/>
            <person name="Davies P."/>
            <person name="de Pablos B."/>
            <person name="Delcher A."/>
            <person name="Deng Z."/>
            <person name="Mays A.D."/>
            <person name="Dew I."/>
            <person name="Dietz S.M."/>
            <person name="Dodson K."/>
            <person name="Doup L.E."/>
            <person name="Downes M."/>
            <person name="Dugan-Rocha S."/>
            <person name="Dunkov B.C."/>
            <person name="Dunn P."/>
            <person name="Durbin K.J."/>
            <person name="Evangelista C.C."/>
            <person name="Ferraz C."/>
            <person name="Ferriera S."/>
            <person name="Fleischmann W."/>
            <person name="Fosler C."/>
            <person name="Gabrielian A.E."/>
            <person name="Garg N.S."/>
            <person name="Gelbart W.M."/>
            <person name="Glasser K."/>
            <person name="Glodek A."/>
            <person name="Gong F."/>
            <person name="Gorrell J.H."/>
            <person name="Gu Z."/>
            <person name="Guan P."/>
            <person name="Harris M."/>
            <person name="Harris N.L."/>
            <person name="Harvey D.A."/>
            <person name="Heiman T.J."/>
            <person name="Hernandez J.R."/>
            <person name="Houck J."/>
            <person name="Hostin D."/>
            <person name="Houston K.A."/>
            <person name="Howland T.J."/>
            <person name="Wei M.-H."/>
            <person name="Ibegwam C."/>
            <person name="Jalali M."/>
            <person name="Kalush F."/>
            <person name="Karpen G.H."/>
            <person name="Ke Z."/>
            <person name="Kennison J.A."/>
            <person name="Ketchum K.A."/>
            <person name="Kimmel B.E."/>
            <person name="Kodira C.D."/>
            <person name="Kraft C.L."/>
            <person name="Kravitz S."/>
            <person name="Kulp D."/>
            <person name="Lai Z."/>
            <person name="Lasko P."/>
            <person name="Lei Y."/>
            <person name="Levitsky A.A."/>
            <person name="Li J.H."/>
            <person name="Li Z."/>
            <person name="Liang Y."/>
            <person name="Lin X."/>
            <person name="Liu X."/>
            <person name="Mattei B."/>
            <person name="McIntosh T.C."/>
            <person name="McLeod M.P."/>
            <person name="McPherson D."/>
            <person name="Merkulov G."/>
            <person name="Milshina N.V."/>
            <person name="Mobarry C."/>
            <person name="Morris J."/>
            <person name="Moshrefi A."/>
            <person name="Mount S.M."/>
            <person name="Moy M."/>
            <person name="Murphy B."/>
            <person name="Murphy L."/>
            <person name="Muzny D.M."/>
            <person name="Nelson D.L."/>
            <person name="Nelson D.R."/>
            <person name="Nelson K.A."/>
            <person name="Nixon K."/>
            <person name="Nusskern D.R."/>
            <person name="Pacleb J.M."/>
            <person name="Palazzolo M."/>
            <person name="Pittman G.S."/>
            <person name="Pan S."/>
            <person name="Pollard J."/>
            <person name="Puri V."/>
            <person name="Reese M.G."/>
            <person name="Reinert K."/>
            <person name="Remington K."/>
            <person name="Saunders R.D.C."/>
            <person name="Scheeler F."/>
            <person name="Shen H."/>
            <person name="Shue B.C."/>
            <person name="Siden-Kiamos I."/>
            <person name="Simpson M."/>
            <person name="Skupski M.P."/>
            <person name="Smith T.J."/>
            <person name="Spier E."/>
            <person name="Spradling A.C."/>
            <person name="Stapleton M."/>
            <person name="Strong R."/>
            <person name="Sun E."/>
            <person name="Svirskas R."/>
            <person name="Tector C."/>
            <person name="Turner R."/>
            <person name="Venter E."/>
            <person name="Wang A.H."/>
            <person name="Wang X."/>
            <person name="Wang Z.-Y."/>
            <person name="Wassarman D.A."/>
            <person name="Weinstock G.M."/>
            <person name="Weissenbach J."/>
            <person name="Williams S.M."/>
            <person name="Woodage T."/>
            <person name="Worley K.C."/>
            <person name="Wu D."/>
            <person name="Yang S."/>
            <person name="Yao Q.A."/>
            <person name="Ye J."/>
            <person name="Yeh R.-F."/>
            <person name="Zaveri J.S."/>
            <person name="Zhan M."/>
            <person name="Zhang G."/>
            <person name="Zhao Q."/>
            <person name="Zheng L."/>
            <person name="Zheng X.H."/>
            <person name="Zhong F.N."/>
            <person name="Zhong W."/>
            <person name="Zhou X."/>
            <person name="Zhu S.C."/>
            <person name="Zhu X."/>
            <person name="Smith H.O."/>
            <person name="Gibbs R.A."/>
            <person name="Myers E.W."/>
            <person name="Rubin G.M."/>
            <person name="Venter J.C."/>
        </authorList>
    </citation>
    <scope>NUCLEOTIDE SEQUENCE [LARGE SCALE GENOMIC DNA]</scope>
    <source>
        <strain>Berkeley</strain>
    </source>
</reference>
<reference key="2">
    <citation type="journal article" date="2002" name="Genome Biol.">
        <title>Annotation of the Drosophila melanogaster euchromatic genome: a systematic review.</title>
        <authorList>
            <person name="Misra S."/>
            <person name="Crosby M.A."/>
            <person name="Mungall C.J."/>
            <person name="Matthews B.B."/>
            <person name="Campbell K.S."/>
            <person name="Hradecky P."/>
            <person name="Huang Y."/>
            <person name="Kaminker J.S."/>
            <person name="Millburn G.H."/>
            <person name="Prochnik S.E."/>
            <person name="Smith C.D."/>
            <person name="Tupy J.L."/>
            <person name="Whitfield E.J."/>
            <person name="Bayraktaroglu L."/>
            <person name="Berman B.P."/>
            <person name="Bettencourt B.R."/>
            <person name="Celniker S.E."/>
            <person name="de Grey A.D.N.J."/>
            <person name="Drysdale R.A."/>
            <person name="Harris N.L."/>
            <person name="Richter J."/>
            <person name="Russo S."/>
            <person name="Schroeder A.J."/>
            <person name="Shu S.Q."/>
            <person name="Stapleton M."/>
            <person name="Yamada C."/>
            <person name="Ashburner M."/>
            <person name="Gelbart W.M."/>
            <person name="Rubin G.M."/>
            <person name="Lewis S.E."/>
        </authorList>
    </citation>
    <scope>GENOME REANNOTATION</scope>
    <source>
        <strain>Berkeley</strain>
    </source>
</reference>
<reference key="3">
    <citation type="journal article" date="2002" name="Genome Biol.">
        <title>A Drosophila full-length cDNA resource.</title>
        <authorList>
            <person name="Stapleton M."/>
            <person name="Carlson J.W."/>
            <person name="Brokstein P."/>
            <person name="Yu C."/>
            <person name="Champe M."/>
            <person name="George R.A."/>
            <person name="Guarin H."/>
            <person name="Kronmiller B."/>
            <person name="Pacleb J.M."/>
            <person name="Park S."/>
            <person name="Wan K.H."/>
            <person name="Rubin G.M."/>
            <person name="Celniker S.E."/>
        </authorList>
    </citation>
    <scope>NUCLEOTIDE SEQUENCE [LARGE SCALE MRNA] (ISOFORM 2)</scope>
    <source>
        <strain>Berkeley</strain>
    </source>
</reference>
<evidence type="ECO:0000250" key="1">
    <source>
        <dbReference type="UniProtKB" id="Q4AE62"/>
    </source>
</evidence>
<evidence type="ECO:0000303" key="2">
    <source>
    </source>
</evidence>
<evidence type="ECO:0000305" key="3"/>
<name>QTMAN_DROME</name>